<keyword id="KW-0030">Aminoacyl-tRNA synthetase</keyword>
<keyword id="KW-0067">ATP-binding</keyword>
<keyword id="KW-0963">Cytoplasm</keyword>
<keyword id="KW-0436">Ligase</keyword>
<keyword id="KW-0547">Nucleotide-binding</keyword>
<keyword id="KW-0648">Protein biosynthesis</keyword>
<keyword id="KW-1185">Reference proteome</keyword>
<name>SYS_PASMU</name>
<protein>
    <recommendedName>
        <fullName evidence="1">Serine--tRNA ligase</fullName>
        <ecNumber evidence="1">6.1.1.11</ecNumber>
    </recommendedName>
    <alternativeName>
        <fullName evidence="1">Seryl-tRNA synthetase</fullName>
        <shortName evidence="1">SerRS</shortName>
    </alternativeName>
    <alternativeName>
        <fullName evidence="1">Seryl-tRNA(Ser/Sec) synthetase</fullName>
    </alternativeName>
</protein>
<proteinExistence type="inferred from homology"/>
<comment type="function">
    <text evidence="1">Catalyzes the attachment of serine to tRNA(Ser). Is also able to aminoacylate tRNA(Sec) with serine, to form the misacylated tRNA L-seryl-tRNA(Sec), which will be further converted into selenocysteinyl-tRNA(Sec).</text>
</comment>
<comment type="catalytic activity">
    <reaction evidence="1">
        <text>tRNA(Ser) + L-serine + ATP = L-seryl-tRNA(Ser) + AMP + diphosphate + H(+)</text>
        <dbReference type="Rhea" id="RHEA:12292"/>
        <dbReference type="Rhea" id="RHEA-COMP:9669"/>
        <dbReference type="Rhea" id="RHEA-COMP:9703"/>
        <dbReference type="ChEBI" id="CHEBI:15378"/>
        <dbReference type="ChEBI" id="CHEBI:30616"/>
        <dbReference type="ChEBI" id="CHEBI:33019"/>
        <dbReference type="ChEBI" id="CHEBI:33384"/>
        <dbReference type="ChEBI" id="CHEBI:78442"/>
        <dbReference type="ChEBI" id="CHEBI:78533"/>
        <dbReference type="ChEBI" id="CHEBI:456215"/>
        <dbReference type="EC" id="6.1.1.11"/>
    </reaction>
</comment>
<comment type="catalytic activity">
    <reaction evidence="1">
        <text>tRNA(Sec) + L-serine + ATP = L-seryl-tRNA(Sec) + AMP + diphosphate + H(+)</text>
        <dbReference type="Rhea" id="RHEA:42580"/>
        <dbReference type="Rhea" id="RHEA-COMP:9742"/>
        <dbReference type="Rhea" id="RHEA-COMP:10128"/>
        <dbReference type="ChEBI" id="CHEBI:15378"/>
        <dbReference type="ChEBI" id="CHEBI:30616"/>
        <dbReference type="ChEBI" id="CHEBI:33019"/>
        <dbReference type="ChEBI" id="CHEBI:33384"/>
        <dbReference type="ChEBI" id="CHEBI:78442"/>
        <dbReference type="ChEBI" id="CHEBI:78533"/>
        <dbReference type="ChEBI" id="CHEBI:456215"/>
        <dbReference type="EC" id="6.1.1.11"/>
    </reaction>
</comment>
<comment type="pathway">
    <text evidence="1">Aminoacyl-tRNA biosynthesis; selenocysteinyl-tRNA(Sec) biosynthesis; L-seryl-tRNA(Sec) from L-serine and tRNA(Sec): step 1/1.</text>
</comment>
<comment type="subunit">
    <text evidence="1">Homodimer. The tRNA molecule binds across the dimer.</text>
</comment>
<comment type="subcellular location">
    <subcellularLocation>
        <location evidence="1">Cytoplasm</location>
    </subcellularLocation>
</comment>
<comment type="domain">
    <text evidence="1">Consists of two distinct domains, a catalytic core and a N-terminal extension that is involved in tRNA binding.</text>
</comment>
<comment type="similarity">
    <text evidence="1">Belongs to the class-II aminoacyl-tRNA synthetase family. Type-1 seryl-tRNA synthetase subfamily.</text>
</comment>
<gene>
    <name evidence="1" type="primary">serS</name>
    <name type="ordered locus">PM0258</name>
</gene>
<dbReference type="EC" id="6.1.1.11" evidence="1"/>
<dbReference type="EMBL" id="AE004439">
    <property type="protein sequence ID" value="AAK02342.1"/>
    <property type="molecule type" value="Genomic_DNA"/>
</dbReference>
<dbReference type="RefSeq" id="WP_005751192.1">
    <property type="nucleotide sequence ID" value="NC_002663.1"/>
</dbReference>
<dbReference type="SMR" id="P57836"/>
<dbReference type="STRING" id="272843.PM0258"/>
<dbReference type="EnsemblBacteria" id="AAK02342">
    <property type="protein sequence ID" value="AAK02342"/>
    <property type="gene ID" value="PM0258"/>
</dbReference>
<dbReference type="KEGG" id="pmu:PM0258"/>
<dbReference type="PATRIC" id="fig|272843.6.peg.266"/>
<dbReference type="HOGENOM" id="CLU_023797_1_1_6"/>
<dbReference type="OrthoDB" id="9804647at2"/>
<dbReference type="UniPathway" id="UPA00906">
    <property type="reaction ID" value="UER00895"/>
</dbReference>
<dbReference type="Proteomes" id="UP000000809">
    <property type="component" value="Chromosome"/>
</dbReference>
<dbReference type="GO" id="GO:0005737">
    <property type="term" value="C:cytoplasm"/>
    <property type="evidence" value="ECO:0007669"/>
    <property type="project" value="UniProtKB-SubCell"/>
</dbReference>
<dbReference type="GO" id="GO:0005524">
    <property type="term" value="F:ATP binding"/>
    <property type="evidence" value="ECO:0007669"/>
    <property type="project" value="UniProtKB-UniRule"/>
</dbReference>
<dbReference type="GO" id="GO:0004828">
    <property type="term" value="F:serine-tRNA ligase activity"/>
    <property type="evidence" value="ECO:0007669"/>
    <property type="project" value="UniProtKB-UniRule"/>
</dbReference>
<dbReference type="GO" id="GO:0016260">
    <property type="term" value="P:selenocysteine biosynthetic process"/>
    <property type="evidence" value="ECO:0007669"/>
    <property type="project" value="UniProtKB-UniRule"/>
</dbReference>
<dbReference type="GO" id="GO:0006434">
    <property type="term" value="P:seryl-tRNA aminoacylation"/>
    <property type="evidence" value="ECO:0007669"/>
    <property type="project" value="UniProtKB-UniRule"/>
</dbReference>
<dbReference type="CDD" id="cd00770">
    <property type="entry name" value="SerRS_core"/>
    <property type="match status" value="1"/>
</dbReference>
<dbReference type="FunFam" id="3.30.930.10:FF:000018">
    <property type="entry name" value="Serine--tRNA ligase"/>
    <property type="match status" value="1"/>
</dbReference>
<dbReference type="Gene3D" id="3.30.930.10">
    <property type="entry name" value="Bira Bifunctional Protein, Domain 2"/>
    <property type="match status" value="1"/>
</dbReference>
<dbReference type="Gene3D" id="1.10.287.40">
    <property type="entry name" value="Serine-tRNA synthetase, tRNA binding domain"/>
    <property type="match status" value="1"/>
</dbReference>
<dbReference type="HAMAP" id="MF_00176">
    <property type="entry name" value="Ser_tRNA_synth_type1"/>
    <property type="match status" value="1"/>
</dbReference>
<dbReference type="InterPro" id="IPR002314">
    <property type="entry name" value="aa-tRNA-synt_IIb"/>
</dbReference>
<dbReference type="InterPro" id="IPR006195">
    <property type="entry name" value="aa-tRNA-synth_II"/>
</dbReference>
<dbReference type="InterPro" id="IPR045864">
    <property type="entry name" value="aa-tRNA-synth_II/BPL/LPL"/>
</dbReference>
<dbReference type="InterPro" id="IPR002317">
    <property type="entry name" value="Ser-tRNA-ligase_type_1"/>
</dbReference>
<dbReference type="InterPro" id="IPR015866">
    <property type="entry name" value="Ser-tRNA-synth_1_N"/>
</dbReference>
<dbReference type="InterPro" id="IPR042103">
    <property type="entry name" value="SerRS_1_N_sf"/>
</dbReference>
<dbReference type="InterPro" id="IPR033729">
    <property type="entry name" value="SerRS_core"/>
</dbReference>
<dbReference type="InterPro" id="IPR010978">
    <property type="entry name" value="tRNA-bd_arm"/>
</dbReference>
<dbReference type="NCBIfam" id="TIGR00414">
    <property type="entry name" value="serS"/>
    <property type="match status" value="1"/>
</dbReference>
<dbReference type="PANTHER" id="PTHR43697:SF1">
    <property type="entry name" value="SERINE--TRNA LIGASE"/>
    <property type="match status" value="1"/>
</dbReference>
<dbReference type="PANTHER" id="PTHR43697">
    <property type="entry name" value="SERYL-TRNA SYNTHETASE"/>
    <property type="match status" value="1"/>
</dbReference>
<dbReference type="Pfam" id="PF02403">
    <property type="entry name" value="Seryl_tRNA_N"/>
    <property type="match status" value="1"/>
</dbReference>
<dbReference type="Pfam" id="PF00587">
    <property type="entry name" value="tRNA-synt_2b"/>
    <property type="match status" value="1"/>
</dbReference>
<dbReference type="PIRSF" id="PIRSF001529">
    <property type="entry name" value="Ser-tRNA-synth_IIa"/>
    <property type="match status" value="1"/>
</dbReference>
<dbReference type="PRINTS" id="PR00981">
    <property type="entry name" value="TRNASYNTHSER"/>
</dbReference>
<dbReference type="SUPFAM" id="SSF55681">
    <property type="entry name" value="Class II aaRS and biotin synthetases"/>
    <property type="match status" value="1"/>
</dbReference>
<dbReference type="SUPFAM" id="SSF46589">
    <property type="entry name" value="tRNA-binding arm"/>
    <property type="match status" value="1"/>
</dbReference>
<dbReference type="PROSITE" id="PS50862">
    <property type="entry name" value="AA_TRNA_LIGASE_II"/>
    <property type="match status" value="1"/>
</dbReference>
<feature type="chain" id="PRO_0000122095" description="Serine--tRNA ligase">
    <location>
        <begin position="1"/>
        <end position="428"/>
    </location>
</feature>
<feature type="binding site" evidence="1">
    <location>
        <begin position="235"/>
        <end position="237"/>
    </location>
    <ligand>
        <name>L-serine</name>
        <dbReference type="ChEBI" id="CHEBI:33384"/>
    </ligand>
</feature>
<feature type="binding site" evidence="1">
    <location>
        <begin position="266"/>
        <end position="268"/>
    </location>
    <ligand>
        <name>ATP</name>
        <dbReference type="ChEBI" id="CHEBI:30616"/>
    </ligand>
</feature>
<feature type="binding site" evidence="1">
    <location>
        <position position="289"/>
    </location>
    <ligand>
        <name>L-serine</name>
        <dbReference type="ChEBI" id="CHEBI:33384"/>
    </ligand>
</feature>
<feature type="binding site" evidence="1">
    <location>
        <begin position="353"/>
        <end position="356"/>
    </location>
    <ligand>
        <name>ATP</name>
        <dbReference type="ChEBI" id="CHEBI:30616"/>
    </ligand>
</feature>
<feature type="binding site" evidence="1">
    <location>
        <position position="389"/>
    </location>
    <ligand>
        <name>L-serine</name>
        <dbReference type="ChEBI" id="CHEBI:33384"/>
    </ligand>
</feature>
<reference key="1">
    <citation type="journal article" date="2001" name="Proc. Natl. Acad. Sci. U.S.A.">
        <title>Complete genomic sequence of Pasteurella multocida Pm70.</title>
        <authorList>
            <person name="May B.J."/>
            <person name="Zhang Q."/>
            <person name="Li L.L."/>
            <person name="Paustian M.L."/>
            <person name="Whittam T.S."/>
            <person name="Kapur V."/>
        </authorList>
    </citation>
    <scope>NUCLEOTIDE SEQUENCE [LARGE SCALE GENOMIC DNA]</scope>
    <source>
        <strain>Pm70</strain>
    </source>
</reference>
<organism>
    <name type="scientific">Pasteurella multocida (strain Pm70)</name>
    <dbReference type="NCBI Taxonomy" id="272843"/>
    <lineage>
        <taxon>Bacteria</taxon>
        <taxon>Pseudomonadati</taxon>
        <taxon>Pseudomonadota</taxon>
        <taxon>Gammaproteobacteria</taxon>
        <taxon>Pasteurellales</taxon>
        <taxon>Pasteurellaceae</taxon>
        <taxon>Pasteurella</taxon>
    </lineage>
</organism>
<accession>P57836</accession>
<evidence type="ECO:0000255" key="1">
    <source>
        <dbReference type="HAMAP-Rule" id="MF_00176"/>
    </source>
</evidence>
<sequence>MIDPNLLRNNLEEVAEKLKVKRNFVLDVALLSELEEQRKSLQVKTESLQAERNARSKNIGQAKARGEDISALLNEVEHMGIELSTTKAHLDEVLAEINQIVLAIPNLPADEVPLGKDESENLEVFRWGTPKTFDFDVKDHVSLGEGLKGLDFAAGVKLSGSRFVVMKGQIAKLHRALSQFMLDLHTEQHGYTETYVPYLVNHATLYGTGQLPKFGEDLFHTNALEGEQPYALIPTAEVPVTNLVRDEILDEADLPLKMTAHTPCFRSEAGSYGRDTRGLIRMHQFDKVELVQIVAPETSMQVLEELTGQAEKVLQLLELPYRKVLLCTGDMGFGSCKTYDLEVWLPAQNTYREISSCSNMWDFQARRMQARCRSKTDKKTRLVHTLNGSGLAVGRTLVAILENYQNADGTITVPSVLRPYMGGLAQIG</sequence>